<feature type="chain" id="PRO_0000456590" description="Highly reducing polyketide synthase fogA">
    <location>
        <begin position="1"/>
        <end position="2403"/>
    </location>
</feature>
<feature type="domain" description="Ketosynthase family 3 (KS3)" evidence="3 9">
    <location>
        <begin position="3"/>
        <end position="428"/>
    </location>
</feature>
<feature type="domain" description="PKS/mFAS DH" evidence="4">
    <location>
        <begin position="929"/>
        <end position="1241"/>
    </location>
</feature>
<feature type="domain" description="Carrier" evidence="2 9">
    <location>
        <begin position="2320"/>
        <end position="2398"/>
    </location>
</feature>
<feature type="region of interest" description="Malonyl-CoA:ACP transacylase (MAT) domain" evidence="1 9">
    <location>
        <begin position="538"/>
        <end position="858"/>
    </location>
</feature>
<feature type="region of interest" description="Dehydratase (DH) domain" evidence="1 9">
    <location>
        <begin position="929"/>
        <end position="1238"/>
    </location>
</feature>
<feature type="region of interest" description="N-terminal hotdog fold" evidence="4">
    <location>
        <begin position="929"/>
        <end position="1068"/>
    </location>
</feature>
<feature type="region of interest" description="C-terminal hotdog fold" evidence="4">
    <location>
        <begin position="1084"/>
        <end position="1241"/>
    </location>
</feature>
<feature type="region of interest" description="Enoyl reductase (ER) domain" evidence="1 9">
    <location>
        <begin position="1663"/>
        <end position="1981"/>
    </location>
</feature>
<feature type="region of interest" description="Ketoreductase (KR) domain" evidence="1 9">
    <location>
        <begin position="2006"/>
        <end position="2185"/>
    </location>
</feature>
<feature type="region of interest" description="Disordered" evidence="6">
    <location>
        <begin position="2280"/>
        <end position="2300"/>
    </location>
</feature>
<feature type="compositionally biased region" description="Low complexity" evidence="6">
    <location>
        <begin position="2282"/>
        <end position="2296"/>
    </location>
</feature>
<feature type="active site" description="For beta-ketoacyl synthase activity" evidence="3">
    <location>
        <position position="176"/>
    </location>
</feature>
<feature type="active site" description="For beta-ketoacyl synthase activity" evidence="3">
    <location>
        <position position="311"/>
    </location>
</feature>
<feature type="active site" description="For beta-ketoacyl synthase activity" evidence="3">
    <location>
        <position position="350"/>
    </location>
</feature>
<feature type="active site" description="For malonyltransferase activity" evidence="5">
    <location>
        <position position="632"/>
    </location>
</feature>
<feature type="active site" description="Proton acceptor; for dehydratase activity" evidence="4">
    <location>
        <position position="961"/>
    </location>
</feature>
<feature type="active site" description="Proton donor; for dehydratase activity" evidence="4">
    <location>
        <position position="1152"/>
    </location>
</feature>
<feature type="modified residue" description="O-(pantetheine 4'-phosphoryl)serine" evidence="2">
    <location>
        <position position="2357"/>
    </location>
</feature>
<gene>
    <name evidence="8" type="primary">fogA</name>
    <name type="ORF">EURHEDRAFT_499888</name>
</gene>
<keyword id="KW-0012">Acyltransferase</keyword>
<keyword id="KW-0511">Multifunctional enzyme</keyword>
<keyword id="KW-0521">NADP</keyword>
<keyword id="KW-0560">Oxidoreductase</keyword>
<keyword id="KW-0596">Phosphopantetheine</keyword>
<keyword id="KW-0597">Phosphoprotein</keyword>
<keyword id="KW-1185">Reference proteome</keyword>
<keyword id="KW-0808">Transferase</keyword>
<name>FOGA_ASPRC</name>
<proteinExistence type="evidence at protein level"/>
<dbReference type="EC" id="2.3.1.-" evidence="7"/>
<dbReference type="EMBL" id="KK088422">
    <property type="protein sequence ID" value="EYE95336.1"/>
    <property type="molecule type" value="Genomic_DNA"/>
</dbReference>
<dbReference type="SMR" id="A0A017SEX7"/>
<dbReference type="STRING" id="1388766.A0A017SEX7"/>
<dbReference type="HOGENOM" id="CLU_000022_31_4_1"/>
<dbReference type="OrthoDB" id="329835at2759"/>
<dbReference type="Proteomes" id="UP000019804">
    <property type="component" value="Unassembled WGS sequence"/>
</dbReference>
<dbReference type="GO" id="GO:0004315">
    <property type="term" value="F:3-oxoacyl-[acyl-carrier-protein] synthase activity"/>
    <property type="evidence" value="ECO:0007669"/>
    <property type="project" value="InterPro"/>
</dbReference>
<dbReference type="GO" id="GO:0004312">
    <property type="term" value="F:fatty acid synthase activity"/>
    <property type="evidence" value="ECO:0007669"/>
    <property type="project" value="TreeGrafter"/>
</dbReference>
<dbReference type="GO" id="GO:0016491">
    <property type="term" value="F:oxidoreductase activity"/>
    <property type="evidence" value="ECO:0007669"/>
    <property type="project" value="UniProtKB-KW"/>
</dbReference>
<dbReference type="GO" id="GO:0006633">
    <property type="term" value="P:fatty acid biosynthetic process"/>
    <property type="evidence" value="ECO:0007669"/>
    <property type="project" value="InterPro"/>
</dbReference>
<dbReference type="GO" id="GO:0044550">
    <property type="term" value="P:secondary metabolite biosynthetic process"/>
    <property type="evidence" value="ECO:0007669"/>
    <property type="project" value="TreeGrafter"/>
</dbReference>
<dbReference type="CDD" id="cd05195">
    <property type="entry name" value="enoyl_red"/>
    <property type="match status" value="1"/>
</dbReference>
<dbReference type="CDD" id="cd05274">
    <property type="entry name" value="KR_FAS_SDR_x"/>
    <property type="match status" value="1"/>
</dbReference>
<dbReference type="CDD" id="cd00833">
    <property type="entry name" value="PKS"/>
    <property type="match status" value="1"/>
</dbReference>
<dbReference type="FunFam" id="3.40.50.720:FF:000209">
    <property type="entry name" value="Polyketide synthase Pks12"/>
    <property type="match status" value="1"/>
</dbReference>
<dbReference type="Gene3D" id="3.40.47.10">
    <property type="match status" value="1"/>
</dbReference>
<dbReference type="Gene3D" id="3.40.366.10">
    <property type="entry name" value="Malonyl-Coenzyme A Acyl Carrier Protein, domain 2"/>
    <property type="match status" value="1"/>
</dbReference>
<dbReference type="Gene3D" id="3.90.180.10">
    <property type="entry name" value="Medium-chain alcohol dehydrogenases, catalytic domain"/>
    <property type="match status" value="1"/>
</dbReference>
<dbReference type="Gene3D" id="3.40.50.720">
    <property type="entry name" value="NAD(P)-binding Rossmann-like Domain"/>
    <property type="match status" value="2"/>
</dbReference>
<dbReference type="Gene3D" id="3.10.129.110">
    <property type="entry name" value="Polyketide synthase dehydratase"/>
    <property type="match status" value="1"/>
</dbReference>
<dbReference type="InterPro" id="IPR001227">
    <property type="entry name" value="Ac_transferase_dom_sf"/>
</dbReference>
<dbReference type="InterPro" id="IPR036736">
    <property type="entry name" value="ACP-like_sf"/>
</dbReference>
<dbReference type="InterPro" id="IPR014043">
    <property type="entry name" value="Acyl_transferase_dom"/>
</dbReference>
<dbReference type="InterPro" id="IPR016035">
    <property type="entry name" value="Acyl_Trfase/lysoPLipase"/>
</dbReference>
<dbReference type="InterPro" id="IPR013154">
    <property type="entry name" value="ADH-like_N"/>
</dbReference>
<dbReference type="InterPro" id="IPR011032">
    <property type="entry name" value="GroES-like_sf"/>
</dbReference>
<dbReference type="InterPro" id="IPR018201">
    <property type="entry name" value="Ketoacyl_synth_AS"/>
</dbReference>
<dbReference type="InterPro" id="IPR014031">
    <property type="entry name" value="Ketoacyl_synth_C"/>
</dbReference>
<dbReference type="InterPro" id="IPR014030">
    <property type="entry name" value="Ketoacyl_synth_N"/>
</dbReference>
<dbReference type="InterPro" id="IPR016036">
    <property type="entry name" value="Malonyl_transacylase_ACP-bd"/>
</dbReference>
<dbReference type="InterPro" id="IPR036291">
    <property type="entry name" value="NAD(P)-bd_dom_sf"/>
</dbReference>
<dbReference type="InterPro" id="IPR056501">
    <property type="entry name" value="NAD-bd_HRPKS_sdrA"/>
</dbReference>
<dbReference type="InterPro" id="IPR032821">
    <property type="entry name" value="PKS_assoc"/>
</dbReference>
<dbReference type="InterPro" id="IPR020841">
    <property type="entry name" value="PKS_Beta-ketoAc_synthase_dom"/>
</dbReference>
<dbReference type="InterPro" id="IPR042104">
    <property type="entry name" value="PKS_dehydratase_sf"/>
</dbReference>
<dbReference type="InterPro" id="IPR020807">
    <property type="entry name" value="PKS_DH"/>
</dbReference>
<dbReference type="InterPro" id="IPR049551">
    <property type="entry name" value="PKS_DH_C"/>
</dbReference>
<dbReference type="InterPro" id="IPR049552">
    <property type="entry name" value="PKS_DH_N"/>
</dbReference>
<dbReference type="InterPro" id="IPR020843">
    <property type="entry name" value="PKS_ER"/>
</dbReference>
<dbReference type="InterPro" id="IPR013968">
    <property type="entry name" value="PKS_KR"/>
</dbReference>
<dbReference type="InterPro" id="IPR049900">
    <property type="entry name" value="PKS_mFAS_DH"/>
</dbReference>
<dbReference type="InterPro" id="IPR050091">
    <property type="entry name" value="PKS_NRPS_Biosynth_Enz"/>
</dbReference>
<dbReference type="InterPro" id="IPR009081">
    <property type="entry name" value="PP-bd_ACP"/>
</dbReference>
<dbReference type="InterPro" id="IPR016039">
    <property type="entry name" value="Thiolase-like"/>
</dbReference>
<dbReference type="PANTHER" id="PTHR43775">
    <property type="entry name" value="FATTY ACID SYNTHASE"/>
    <property type="match status" value="1"/>
</dbReference>
<dbReference type="PANTHER" id="PTHR43775:SF50">
    <property type="entry name" value="HIGHLY REDUCING POLYKETIDE SYNTHASE SRDA"/>
    <property type="match status" value="1"/>
</dbReference>
<dbReference type="Pfam" id="PF00698">
    <property type="entry name" value="Acyl_transf_1"/>
    <property type="match status" value="1"/>
</dbReference>
<dbReference type="Pfam" id="PF08240">
    <property type="entry name" value="ADH_N"/>
    <property type="match status" value="1"/>
</dbReference>
<dbReference type="Pfam" id="PF13602">
    <property type="entry name" value="ADH_zinc_N_2"/>
    <property type="match status" value="1"/>
</dbReference>
<dbReference type="Pfam" id="PF16197">
    <property type="entry name" value="KAsynt_C_assoc"/>
    <property type="match status" value="1"/>
</dbReference>
<dbReference type="Pfam" id="PF00109">
    <property type="entry name" value="ketoacyl-synt"/>
    <property type="match status" value="1"/>
</dbReference>
<dbReference type="Pfam" id="PF02801">
    <property type="entry name" value="Ketoacyl-synt_C"/>
    <property type="match status" value="1"/>
</dbReference>
<dbReference type="Pfam" id="PF08659">
    <property type="entry name" value="KR"/>
    <property type="match status" value="1"/>
</dbReference>
<dbReference type="Pfam" id="PF23114">
    <property type="entry name" value="NAD-bd_HRPKS_sdrA"/>
    <property type="match status" value="1"/>
</dbReference>
<dbReference type="Pfam" id="PF21089">
    <property type="entry name" value="PKS_DH_N"/>
    <property type="match status" value="1"/>
</dbReference>
<dbReference type="Pfam" id="PF14765">
    <property type="entry name" value="PS-DH"/>
    <property type="match status" value="1"/>
</dbReference>
<dbReference type="SMART" id="SM00827">
    <property type="entry name" value="PKS_AT"/>
    <property type="match status" value="1"/>
</dbReference>
<dbReference type="SMART" id="SM00826">
    <property type="entry name" value="PKS_DH"/>
    <property type="match status" value="1"/>
</dbReference>
<dbReference type="SMART" id="SM00829">
    <property type="entry name" value="PKS_ER"/>
    <property type="match status" value="1"/>
</dbReference>
<dbReference type="SMART" id="SM00822">
    <property type="entry name" value="PKS_KR"/>
    <property type="match status" value="1"/>
</dbReference>
<dbReference type="SMART" id="SM00825">
    <property type="entry name" value="PKS_KS"/>
    <property type="match status" value="1"/>
</dbReference>
<dbReference type="SUPFAM" id="SSF47336">
    <property type="entry name" value="ACP-like"/>
    <property type="match status" value="1"/>
</dbReference>
<dbReference type="SUPFAM" id="SSF52151">
    <property type="entry name" value="FabD/lysophospholipase-like"/>
    <property type="match status" value="1"/>
</dbReference>
<dbReference type="SUPFAM" id="SSF50129">
    <property type="entry name" value="GroES-like"/>
    <property type="match status" value="1"/>
</dbReference>
<dbReference type="SUPFAM" id="SSF51735">
    <property type="entry name" value="NAD(P)-binding Rossmann-fold domains"/>
    <property type="match status" value="2"/>
</dbReference>
<dbReference type="SUPFAM" id="SSF55048">
    <property type="entry name" value="Probable ACP-binding domain of malonyl-CoA ACP transacylase"/>
    <property type="match status" value="1"/>
</dbReference>
<dbReference type="SUPFAM" id="SSF53901">
    <property type="entry name" value="Thiolase-like"/>
    <property type="match status" value="1"/>
</dbReference>
<dbReference type="PROSITE" id="PS50075">
    <property type="entry name" value="CARRIER"/>
    <property type="match status" value="1"/>
</dbReference>
<dbReference type="PROSITE" id="PS00606">
    <property type="entry name" value="KS3_1"/>
    <property type="match status" value="1"/>
</dbReference>
<dbReference type="PROSITE" id="PS52004">
    <property type="entry name" value="KS3_2"/>
    <property type="match status" value="1"/>
</dbReference>
<dbReference type="PROSITE" id="PS52019">
    <property type="entry name" value="PKS_MFAS_DH"/>
    <property type="match status" value="1"/>
</dbReference>
<protein>
    <recommendedName>
        <fullName evidence="8">Highly reducing polyketide synthase fogA</fullName>
        <shortName evidence="8">HRPKS fogA</shortName>
        <ecNumber evidence="7">2.3.1.-</ecNumber>
    </recommendedName>
    <alternativeName>
        <fullName evidence="8">Flavoglaucin biosynthesis cluster protein A</fullName>
    </alternativeName>
</protein>
<sequence length="2403" mass="260935">MNDDPPCIVGMACRLPGDVRSPSQLWDLVINQKTGQGPTPPIRYNVDGYYHPDGNRSGGINVPGGYFINEDIRQFDNGFFGINNLEATYMDPQQRKLLEVVFECFESTGASMKSMSGSNTGVYVGNFSVDYQPMQTRDADYLHRYTSTGSGATIMSNRISHVFNLHGPSFTLDTACSSSVYALHQALTAIKVGDCESAVVASANLIMSPELHIGAAKSGVLSPTGTCHTFDASADGYGRAEGVNAIYVKRLSAALRDGNQIRAIVRGSAVNANGRTPGIALPSGNLQEAVMRKAYQNAGLDFAETDYVECHGTGTPVGDPIEVDAVGRCFFRPQGQAPLLIGSVKTNIGHSEAASGLSSVLKVVTAFEKGQIPPTHGLVKLNPKLIPILEQRNLKVVTQADQWPRALRRASVNSFGYGGANAHVILESADSYLSQYFPGRLVTQKRRIENSDQVVVLPVSAASSKSLDIRVQDISQAVSKLFDAENLQGLAYTLTNRRDHLRHKSFLLAKYEGSGKLVEAVEDANNSSDREGLPFGFVFTGQGAQYAGMAKELLAHNRQFRNTIHRLDDVLKALPDPYAPDWTLEQTLLDGPSESRINEVTRSQPICTALQVGLVDLLRSWGVSPTAVVGHSSGEIAAAYAAGLLNSTQAILVAYFRGYSVGKLQSQGTMMAAGVSAQTAKSLIEAKDLQENVRVACVNAPESVTLSGASDGIEALRAEFQDQKKFARKLETGGRAYHSHMMKEIGALYQDLLTPLFAVANSEVPAAARMYSSVGHSTDDLRVLEGHTDWAAYWRQNLEQPVQFSGALASLAEKEGSKLHLIEVGPHSALKGPIQQIRTSIGLDKNSLPYAPSLVRKEDADECLKKLAGTLFVHGHVLDWNKINDLPESGHELVPLHDLAPYPWDYSAPLNWAEPRTSVELRNRKYLRHELLGTFALTGNGIDFTWRNLIRPKEMPWFSDHKLETSVVFPAAGYLAVAIEAVSQVTETRGRLDVAFEFRNVNITAALIVPPDSDPAAKDLELHTTMSLRKLSTVNTSADWHDFAVSSWAAGETTIHCAGSIRVVEPLTESVKHVTTTTVDNDQSFEASPTNRWYQKWDDEGLCFGPYFQSLTSLRTDSERTRSEAIASLRLAPEISSKSYIDSYPVHPITIDACFQAAILGGTAGHLPSLRAWMPVFISECRIQPSSLATSPELEAVIHARSEEVGFSSRRIDATLRDPHGVPVVNLRDARMSLYTGKSSAVQSSSDGKNTNPIDKYMQRQPTLRVHWKPDVARLHPGIERQLQEYVAAFVDQQPLDSDLRDDESIAVIAALVDLAGHKHPRMRVLELGGDDVGYKAKQWLGILNKETAFARCQSWQAGVLDGNGEIVVEGDGEDSSPFDVVVIPRNSSSKQIWSQDPESIASLVSDNGIIVARKSNAAVDVLKALKFNVLPIGQSVILALRPPQWTSLQGRNALIVLGRNPSSTVAEFANTLAAYLRDQAGVALASIVPLDRIDTTDISENDVAISLLETEREFLATISPEDMDRLRAITDVVRDLLWVTGANMLGSVPDPNLTLSNGLSRALMLEQPALRYSVLDIGPVSLLSSTPNAIGTCENALRALAINQEKDDSEFIQRDGILHISRFGPDQDVNSLFRRRLEPLGSLERQTLATAGIARLSVGRPGATDSMFFQQLASTAKTVPEAGYVDIEVKAVGLNAKDVYAIAGRVETRNLTTAIDFSGIITAVGEGVEHLSVGDRVVAWAPNHFTTTERVPAGSVHKLLDHEELTIMSTLITVYGTALYAFNHIAHLRAGESVLIHAGSGGLGFAAITLAQKRGAVVYTTAGSKAKREYLVNELGVPDAHIFNSRDASFVEGILEVTNGRGVDVVLNSLTGDLLHASWACLATFGRFIEVGKRDLVEAGKLDMRVFLRSCTFTAFDLSEFFYAQEPHNRAIWDGLMTQVIELYRAGDIQAPPVKVFGVNEITQAYRTFTQQDRIGKIVISLENPQARIPVVPAAYLSVFDPEKVYLLIGCLGGLGRSLSRWMMSRGARHFVFLGRSGADKPSAQQLVARLQSAGAHVDVVRGDVSRAADVTAAVAASLATGRQIGGVVQAAMGLHEALFTRMPNQAWHTGIDPKWQGTWNLHNALQGHDDALDFFLLTSSVSGTVGTATESNYCAANGFLDAFARWRRSQGKPAVAVGLGMISEVGYLHENPEIEALLLRKGIQPLNEDEFLQVLDLALLSEAAHNPDQAHLLTGLEPAGVRQLKARGFDVSNHGVLTEARAALLAASLAAEQEVLDAQNSTSSSGSNSNTPTTAAPWFKALPGTATSTFASEADAESLNAAILRLIKKRFSNLILMPLEQIDERKALPQFGVDSMIASEFRTWFYTVFKVDIPFLDLMSAQKSLEGLAVVVEGKLVEGWK</sequence>
<accession>A0A017SEX7</accession>
<reference key="1">
    <citation type="journal article" date="2014" name="Nat. Commun.">
        <title>Genomic adaptations of the halophilic Dead Sea filamentous fungus Eurotium rubrum.</title>
        <authorList>
            <person name="Kis-Papo T."/>
            <person name="Weig A.R."/>
            <person name="Riley R."/>
            <person name="Persoh D."/>
            <person name="Salamov A."/>
            <person name="Sun H."/>
            <person name="Lipzen A."/>
            <person name="Wasser S.P."/>
            <person name="Rambold G."/>
            <person name="Grigoriev I.V."/>
            <person name="Nevo E."/>
        </authorList>
    </citation>
    <scope>NUCLEOTIDE SEQUENCE [LARGE SCALE GENOMIC DNA]</scope>
    <source>
        <strain>CBS 135680</strain>
    </source>
</reference>
<reference key="2">
    <citation type="journal article" date="2020" name="Org. Lett.">
        <title>Biosynthesis of the prenylated salicylaldehyde flavoglaucin requires temporary reduction to salicyl alcohol for decoration before reoxidation to the final product.</title>
        <authorList>
            <person name="Nies J."/>
            <person name="Ran H."/>
            <person name="Wohlgemuth V."/>
            <person name="Yin W.B."/>
            <person name="Li S.M."/>
        </authorList>
    </citation>
    <scope>FUNCTION</scope>
    <scope>DISRUPTION PHENOTYPE</scope>
    <scope>CATALYTIC ACTIVITY</scope>
    <scope>PATHWAY</scope>
</reference>
<comment type="function">
    <text evidence="7">Highly reducing polyketide synthase; part of the gene cluster that mediates the biosynthesis of flavoglaucin and congeners (including aspergin, dihydroauroglaucin and auroglaucin), prenylated salicylaldehyde derivatives carrying a saturated or an unsaturated C-7 side chain (PubMed:32134669). FogA releases the carboxylic acid (8E,10E,12E)-3,5,7-trihydroxytetradeca-8,10,12-trienoic acid as its product, as well as derivatives with one and two double bonds (PubMed:32134669). FogA is indeed able to reduce the initial triketide, thus being at least partially responsible for the differently saturated heptyl side chains of flavoglaucin congeners (PubMed:32134669). The oxidoreductases fogB, fogC and fogD modify the nascent polyketide in fogA-bound form and, together, fogA, fogB, fogC and fogD are necessary for the formation of the aromatic core and the cyclized PKS products are released as salicyl alcohols (PubMed:32134669). In particular, fogB is responsible for oxidation of a hydroxyl group or reduction of remaining double bond(s) at the C-7 residue whereas fogD is probably involved in the reductive release of the modified PKS products (PubMed:32134669). The cytochrome P450 monooxygenase fogE is then responsible for the hydroxylation at C-3 of the benzene ring (PubMed:32134669). The fogE products are substrates of the prenyltransferase fogH and the prenylated benzyl alcohols are subsequently oxidized by the fogF to produce the final aryl aldehydes flavoglaucin and congeners (PubMed:32134669). The short-chain dehydrogenase fogG does not seem to be involved in the biosynthesis of the prenylated salicylaldehyde derivatives (PubMed:32134669).</text>
</comment>
<comment type="cofactor">
    <cofactor evidence="2">
        <name>pantetheine 4'-phosphate</name>
        <dbReference type="ChEBI" id="CHEBI:47942"/>
    </cofactor>
</comment>
<comment type="pathway">
    <text evidence="7">Secondary metabolite biosynthesis.</text>
</comment>
<comment type="domain">
    <text evidence="9">Multidomain protein; including a ketosynthase (KS) that catalyzes repeated decarboxylative condensation to elongate the polyketide backbone; a malonyl-CoA:ACP transacylase (MAT) that selects and transfers the extender unit malonyl-CoA; a dehydratase (DH) domain that reduces hydroxyl groups to enoyl groups; an enoyl reductase (ER) domain that reduces enoyl groups to alkyl group; a ketoreductase (KR) domain that catalyzes beta-ketoreduction steps; and an acyl-carrier protein (ACP) that serves as the tether of the growing and completed polyketide via its phosphopantetheinyl arm.</text>
</comment>
<comment type="disruption phenotype">
    <text evidence="7">Results in complete abolishment of product formation.</text>
</comment>
<evidence type="ECO:0000255" key="1"/>
<evidence type="ECO:0000255" key="2">
    <source>
        <dbReference type="PROSITE-ProRule" id="PRU00258"/>
    </source>
</evidence>
<evidence type="ECO:0000255" key="3">
    <source>
        <dbReference type="PROSITE-ProRule" id="PRU01348"/>
    </source>
</evidence>
<evidence type="ECO:0000255" key="4">
    <source>
        <dbReference type="PROSITE-ProRule" id="PRU01363"/>
    </source>
</evidence>
<evidence type="ECO:0000255" key="5">
    <source>
        <dbReference type="PROSITE-ProRule" id="PRU10022"/>
    </source>
</evidence>
<evidence type="ECO:0000256" key="6">
    <source>
        <dbReference type="SAM" id="MobiDB-lite"/>
    </source>
</evidence>
<evidence type="ECO:0000269" key="7">
    <source>
    </source>
</evidence>
<evidence type="ECO:0000303" key="8">
    <source>
    </source>
</evidence>
<evidence type="ECO:0000305" key="9">
    <source>
    </source>
</evidence>
<organism>
    <name type="scientific">Aspergillus ruber (strain CBS 135680)</name>
    <dbReference type="NCBI Taxonomy" id="1388766"/>
    <lineage>
        <taxon>Eukaryota</taxon>
        <taxon>Fungi</taxon>
        <taxon>Dikarya</taxon>
        <taxon>Ascomycota</taxon>
        <taxon>Pezizomycotina</taxon>
        <taxon>Eurotiomycetes</taxon>
        <taxon>Eurotiomycetidae</taxon>
        <taxon>Eurotiales</taxon>
        <taxon>Aspergillaceae</taxon>
        <taxon>Aspergillus</taxon>
        <taxon>Aspergillus subgen. Aspergillus</taxon>
    </lineage>
</organism>